<proteinExistence type="evidence at protein level"/>
<sequence length="90" mass="9841">MKTLLLTLVLVTIMCLDLGYTIRCFITPDVTSTDCPNGHVCYTKTWCDGFCSSRGRRVELGCAATCPTVKPGVDIQCCSTDNCNPFPTRP</sequence>
<feature type="signal peptide" evidence="3">
    <location>
        <begin position="1"/>
        <end position="21"/>
    </location>
</feature>
<feature type="chain" id="PRO_0000035431" description="Long neurotoxin 7" evidence="6">
    <location>
        <begin position="22"/>
        <end position="90"/>
    </location>
</feature>
<feature type="disulfide bond" evidence="1">
    <location>
        <begin position="24"/>
        <end position="41"/>
    </location>
</feature>
<feature type="disulfide bond" evidence="1">
    <location>
        <begin position="35"/>
        <end position="62"/>
    </location>
</feature>
<feature type="disulfide bond" evidence="1">
    <location>
        <begin position="47"/>
        <end position="51"/>
    </location>
</feature>
<feature type="disulfide bond" evidence="1">
    <location>
        <begin position="66"/>
        <end position="77"/>
    </location>
</feature>
<feature type="disulfide bond" evidence="1">
    <location>
        <begin position="78"/>
        <end position="83"/>
    </location>
</feature>
<protein>
    <recommendedName>
        <fullName evidence="4">Long neurotoxin 7</fullName>
        <shortName evidence="4">LNTX7</shortName>
    </recommendedName>
</protein>
<name>3L27_NAJSP</name>
<organism>
    <name type="scientific">Naja sputatrix</name>
    <name type="common">Malayan spitting cobra</name>
    <name type="synonym">Naja naja sputatrix</name>
    <dbReference type="NCBI Taxonomy" id="33626"/>
    <lineage>
        <taxon>Eukaryota</taxon>
        <taxon>Metazoa</taxon>
        <taxon>Chordata</taxon>
        <taxon>Craniata</taxon>
        <taxon>Vertebrata</taxon>
        <taxon>Euteleostomi</taxon>
        <taxon>Lepidosauria</taxon>
        <taxon>Squamata</taxon>
        <taxon>Bifurcata</taxon>
        <taxon>Unidentata</taxon>
        <taxon>Episquamata</taxon>
        <taxon>Toxicofera</taxon>
        <taxon>Serpentes</taxon>
        <taxon>Colubroidea</taxon>
        <taxon>Elapidae</taxon>
        <taxon>Elapinae</taxon>
        <taxon>Naja</taxon>
    </lineage>
</organism>
<comment type="function">
    <text evidence="2">Binds with high affinity to muscular (alpha-1/CHRNA1) and neuronal (alpha-7/CHRNA7) nicotinic acetylcholine receptor (nAChR) and inhibits acetylcholine from binding to the receptor, thereby impairing neuromuscular and neuronal transmission.</text>
</comment>
<comment type="subcellular location">
    <subcellularLocation>
        <location evidence="3">Secreted</location>
    </subcellularLocation>
</comment>
<comment type="tissue specificity">
    <text evidence="6">Expressed by the venom gland.</text>
</comment>
<comment type="toxic dose">
    <text evidence="3">LD(50) is 0.14 mg/kg by intravenous injection into mice.</text>
</comment>
<comment type="similarity">
    <text evidence="5">Belongs to the three-finger toxin family. Long-chain subfamily. Type II alpha-neurotoxin sub-subfamily.</text>
</comment>
<reference key="1">
    <citation type="journal article" date="2003" name="FEBS Lett.">
        <title>Structurally conserved alpha-neurotoxin genes encode functionally diverse proteins in the venom of Naja sputatrix.</title>
        <authorList>
            <person name="Jeyaseelan K."/>
            <person name="Poh S.L."/>
            <person name="Nair R."/>
            <person name="Armugam A."/>
        </authorList>
    </citation>
    <scope>NUCLEOTIDE SEQUENCE [MRNA]</scope>
    <scope>PROTEIN SEQUENCE OF 22-36</scope>
    <scope>TOXIC DOSE</scope>
    <scope>SUBCELLULAR LOCATION</scope>
    <source>
        <tissue>Venom</tissue>
        <tissue>Venom gland</tissue>
    </source>
</reference>
<keyword id="KW-0008">Acetylcholine receptor inhibiting toxin</keyword>
<keyword id="KW-0903">Direct protein sequencing</keyword>
<keyword id="KW-1015">Disulfide bond</keyword>
<keyword id="KW-0872">Ion channel impairing toxin</keyword>
<keyword id="KW-0528">Neurotoxin</keyword>
<keyword id="KW-0629">Postsynaptic neurotoxin</keyword>
<keyword id="KW-0964">Secreted</keyword>
<keyword id="KW-0732">Signal</keyword>
<keyword id="KW-0800">Toxin</keyword>
<dbReference type="EMBL" id="AF026893">
    <property type="protein sequence ID" value="AAB87417.1"/>
    <property type="molecule type" value="mRNA"/>
</dbReference>
<dbReference type="EMBL" id="AY081763">
    <property type="protein sequence ID" value="AAL87469.1"/>
    <property type="molecule type" value="Genomic_DNA"/>
</dbReference>
<dbReference type="SMR" id="O42257"/>
<dbReference type="GO" id="GO:0005576">
    <property type="term" value="C:extracellular region"/>
    <property type="evidence" value="ECO:0007669"/>
    <property type="project" value="UniProtKB-SubCell"/>
</dbReference>
<dbReference type="GO" id="GO:0030550">
    <property type="term" value="F:acetylcholine receptor inhibitor activity"/>
    <property type="evidence" value="ECO:0007669"/>
    <property type="project" value="UniProtKB-KW"/>
</dbReference>
<dbReference type="GO" id="GO:0099106">
    <property type="term" value="F:ion channel regulator activity"/>
    <property type="evidence" value="ECO:0007669"/>
    <property type="project" value="UniProtKB-KW"/>
</dbReference>
<dbReference type="GO" id="GO:0090729">
    <property type="term" value="F:toxin activity"/>
    <property type="evidence" value="ECO:0007669"/>
    <property type="project" value="UniProtKB-KW"/>
</dbReference>
<dbReference type="CDD" id="cd00206">
    <property type="entry name" value="TFP_snake_toxin"/>
    <property type="match status" value="1"/>
</dbReference>
<dbReference type="Gene3D" id="2.10.60.10">
    <property type="entry name" value="CD59"/>
    <property type="match status" value="1"/>
</dbReference>
<dbReference type="InterPro" id="IPR003571">
    <property type="entry name" value="Snake_3FTx"/>
</dbReference>
<dbReference type="InterPro" id="IPR045860">
    <property type="entry name" value="Snake_toxin-like_sf"/>
</dbReference>
<dbReference type="InterPro" id="IPR018354">
    <property type="entry name" value="Snake_toxin_con_site"/>
</dbReference>
<dbReference type="InterPro" id="IPR054131">
    <property type="entry name" value="Toxin_cobra-type"/>
</dbReference>
<dbReference type="Pfam" id="PF21947">
    <property type="entry name" value="Toxin_cobra-type"/>
    <property type="match status" value="1"/>
</dbReference>
<dbReference type="SUPFAM" id="SSF57302">
    <property type="entry name" value="Snake toxin-like"/>
    <property type="match status" value="1"/>
</dbReference>
<dbReference type="PROSITE" id="PS00272">
    <property type="entry name" value="SNAKE_TOXIN"/>
    <property type="match status" value="1"/>
</dbReference>
<evidence type="ECO:0000250" key="1">
    <source>
        <dbReference type="UniProtKB" id="P25671"/>
    </source>
</evidence>
<evidence type="ECO:0000250" key="2">
    <source>
        <dbReference type="UniProtKB" id="P60615"/>
    </source>
</evidence>
<evidence type="ECO:0000269" key="3">
    <source>
    </source>
</evidence>
<evidence type="ECO:0000303" key="4">
    <source>
    </source>
</evidence>
<evidence type="ECO:0000305" key="5"/>
<evidence type="ECO:0000305" key="6">
    <source>
    </source>
</evidence>
<accession>O42257</accession>